<keyword id="KW-0067">ATP-binding</keyword>
<keyword id="KW-0963">Cytoplasm</keyword>
<keyword id="KW-0418">Kinase</keyword>
<keyword id="KW-0520">NAD</keyword>
<keyword id="KW-0521">NADP</keyword>
<keyword id="KW-0547">Nucleotide-binding</keyword>
<keyword id="KW-0808">Transferase</keyword>
<name>NADK_BUCA5</name>
<dbReference type="EC" id="2.7.1.23" evidence="1"/>
<dbReference type="EMBL" id="CP001161">
    <property type="protein sequence ID" value="ACL30556.1"/>
    <property type="molecule type" value="Genomic_DNA"/>
</dbReference>
<dbReference type="RefSeq" id="WP_009874142.1">
    <property type="nucleotide sequence ID" value="NC_011833.1"/>
</dbReference>
<dbReference type="SMR" id="B8D8Y4"/>
<dbReference type="KEGG" id="bap:BUAP5A_182"/>
<dbReference type="HOGENOM" id="CLU_008831_0_1_6"/>
<dbReference type="OrthoDB" id="9774737at2"/>
<dbReference type="Proteomes" id="UP000006904">
    <property type="component" value="Chromosome"/>
</dbReference>
<dbReference type="GO" id="GO:0005737">
    <property type="term" value="C:cytoplasm"/>
    <property type="evidence" value="ECO:0007669"/>
    <property type="project" value="UniProtKB-SubCell"/>
</dbReference>
<dbReference type="GO" id="GO:0005524">
    <property type="term" value="F:ATP binding"/>
    <property type="evidence" value="ECO:0007669"/>
    <property type="project" value="UniProtKB-KW"/>
</dbReference>
<dbReference type="GO" id="GO:0046872">
    <property type="term" value="F:metal ion binding"/>
    <property type="evidence" value="ECO:0007669"/>
    <property type="project" value="UniProtKB-UniRule"/>
</dbReference>
<dbReference type="GO" id="GO:0051287">
    <property type="term" value="F:NAD binding"/>
    <property type="evidence" value="ECO:0007669"/>
    <property type="project" value="UniProtKB-ARBA"/>
</dbReference>
<dbReference type="GO" id="GO:0003951">
    <property type="term" value="F:NAD+ kinase activity"/>
    <property type="evidence" value="ECO:0007669"/>
    <property type="project" value="UniProtKB-UniRule"/>
</dbReference>
<dbReference type="GO" id="GO:0019674">
    <property type="term" value="P:NAD metabolic process"/>
    <property type="evidence" value="ECO:0007669"/>
    <property type="project" value="InterPro"/>
</dbReference>
<dbReference type="GO" id="GO:0006741">
    <property type="term" value="P:NADP biosynthetic process"/>
    <property type="evidence" value="ECO:0007669"/>
    <property type="project" value="UniProtKB-UniRule"/>
</dbReference>
<dbReference type="FunFam" id="2.60.200.30:FF:000001">
    <property type="entry name" value="NAD kinase"/>
    <property type="match status" value="1"/>
</dbReference>
<dbReference type="Gene3D" id="3.40.50.10330">
    <property type="entry name" value="Probable inorganic polyphosphate/atp-NAD kinase, domain 1"/>
    <property type="match status" value="1"/>
</dbReference>
<dbReference type="Gene3D" id="2.60.200.30">
    <property type="entry name" value="Probable inorganic polyphosphate/atp-NAD kinase, domain 2"/>
    <property type="match status" value="1"/>
</dbReference>
<dbReference type="HAMAP" id="MF_00361">
    <property type="entry name" value="NAD_kinase"/>
    <property type="match status" value="1"/>
</dbReference>
<dbReference type="InterPro" id="IPR017438">
    <property type="entry name" value="ATP-NAD_kinase_N"/>
</dbReference>
<dbReference type="InterPro" id="IPR017437">
    <property type="entry name" value="ATP-NAD_kinase_PpnK-typ_C"/>
</dbReference>
<dbReference type="InterPro" id="IPR016064">
    <property type="entry name" value="NAD/diacylglycerol_kinase_sf"/>
</dbReference>
<dbReference type="InterPro" id="IPR002504">
    <property type="entry name" value="NADK"/>
</dbReference>
<dbReference type="NCBIfam" id="NF002306">
    <property type="entry name" value="PRK01231.1"/>
    <property type="match status" value="1"/>
</dbReference>
<dbReference type="NCBIfam" id="NF002893">
    <property type="entry name" value="PRK03378.1"/>
    <property type="match status" value="1"/>
</dbReference>
<dbReference type="PANTHER" id="PTHR20275">
    <property type="entry name" value="NAD KINASE"/>
    <property type="match status" value="1"/>
</dbReference>
<dbReference type="PANTHER" id="PTHR20275:SF0">
    <property type="entry name" value="NAD KINASE"/>
    <property type="match status" value="1"/>
</dbReference>
<dbReference type="Pfam" id="PF01513">
    <property type="entry name" value="NAD_kinase"/>
    <property type="match status" value="1"/>
</dbReference>
<dbReference type="Pfam" id="PF20143">
    <property type="entry name" value="NAD_kinase_C"/>
    <property type="match status" value="1"/>
</dbReference>
<dbReference type="SUPFAM" id="SSF111331">
    <property type="entry name" value="NAD kinase/diacylglycerol kinase-like"/>
    <property type="match status" value="1"/>
</dbReference>
<reference key="1">
    <citation type="journal article" date="2009" name="Science">
        <title>The dynamics and time scale of ongoing genomic erosion in symbiotic bacteria.</title>
        <authorList>
            <person name="Moran N.A."/>
            <person name="McLaughlin H.J."/>
            <person name="Sorek R."/>
        </authorList>
    </citation>
    <scope>NUCLEOTIDE SEQUENCE [LARGE SCALE GENOMIC DNA]</scope>
    <source>
        <strain>5A</strain>
    </source>
</reference>
<accession>B8D8Y4</accession>
<comment type="function">
    <text evidence="1">Involved in the regulation of the intracellular balance of NAD and NADP, and is a key enzyme in the biosynthesis of NADP. Catalyzes specifically the phosphorylation on 2'-hydroxyl of the adenosine moiety of NAD to yield NADP.</text>
</comment>
<comment type="catalytic activity">
    <reaction evidence="1">
        <text>NAD(+) + ATP = ADP + NADP(+) + H(+)</text>
        <dbReference type="Rhea" id="RHEA:18629"/>
        <dbReference type="ChEBI" id="CHEBI:15378"/>
        <dbReference type="ChEBI" id="CHEBI:30616"/>
        <dbReference type="ChEBI" id="CHEBI:57540"/>
        <dbReference type="ChEBI" id="CHEBI:58349"/>
        <dbReference type="ChEBI" id="CHEBI:456216"/>
        <dbReference type="EC" id="2.7.1.23"/>
    </reaction>
</comment>
<comment type="cofactor">
    <cofactor evidence="1">
        <name>a divalent metal cation</name>
        <dbReference type="ChEBI" id="CHEBI:60240"/>
    </cofactor>
</comment>
<comment type="subcellular location">
    <subcellularLocation>
        <location evidence="1">Cytoplasm</location>
    </subcellularLocation>
</comment>
<comment type="similarity">
    <text evidence="1">Belongs to the NAD kinase family.</text>
</comment>
<organism>
    <name type="scientific">Buchnera aphidicola subsp. Acyrthosiphon pisum (strain 5A)</name>
    <dbReference type="NCBI Taxonomy" id="563178"/>
    <lineage>
        <taxon>Bacteria</taxon>
        <taxon>Pseudomonadati</taxon>
        <taxon>Pseudomonadota</taxon>
        <taxon>Gammaproteobacteria</taxon>
        <taxon>Enterobacterales</taxon>
        <taxon>Erwiniaceae</taxon>
        <taxon>Buchnera</taxon>
    </lineage>
</organism>
<protein>
    <recommendedName>
        <fullName evidence="1">NAD kinase</fullName>
        <ecNumber evidence="1">2.7.1.23</ecNumber>
    </recommendedName>
    <alternativeName>
        <fullName evidence="1">ATP-dependent NAD kinase</fullName>
    </alternativeName>
</protein>
<sequence length="292" mass="32576">MKQHFTCIGIVGRPRHDSALITHKTLYEWLIKNGYKVFIEHTVARELKLNNPNTATLIEIGEFCDLAVVIGGDGNLLCAARVLSFYNIKIIGINRGNLGFLADLNPDTGLKKLSEVLSGNYSLENRFLLDAQVCQKKIISRSSIAINEVVLHTKNLAHMIEFEVYIDNKFSFSQRADGLIVSTPTGSTGYSLSAGGPIIAASLDAIVLVPMFPHTLSARPLVIHSDSIICLKFSNIQTNLKISCDSQIILTIKKGECVFIRRSCYYLNLIHPKSYNYFKTLTSKLSWSKKFF</sequence>
<proteinExistence type="inferred from homology"/>
<feature type="chain" id="PRO_1000133559" description="NAD kinase">
    <location>
        <begin position="1"/>
        <end position="292"/>
    </location>
</feature>
<feature type="active site" description="Proton acceptor" evidence="1">
    <location>
        <position position="73"/>
    </location>
</feature>
<feature type="binding site" evidence="1">
    <location>
        <begin position="73"/>
        <end position="74"/>
    </location>
    <ligand>
        <name>NAD(+)</name>
        <dbReference type="ChEBI" id="CHEBI:57540"/>
    </ligand>
</feature>
<feature type="binding site" evidence="1">
    <location>
        <begin position="147"/>
        <end position="148"/>
    </location>
    <ligand>
        <name>NAD(+)</name>
        <dbReference type="ChEBI" id="CHEBI:57540"/>
    </ligand>
</feature>
<feature type="binding site" evidence="1">
    <location>
        <position position="158"/>
    </location>
    <ligand>
        <name>NAD(+)</name>
        <dbReference type="ChEBI" id="CHEBI:57540"/>
    </ligand>
</feature>
<feature type="binding site" evidence="1">
    <location>
        <position position="175"/>
    </location>
    <ligand>
        <name>NAD(+)</name>
        <dbReference type="ChEBI" id="CHEBI:57540"/>
    </ligand>
</feature>
<feature type="binding site" evidence="1">
    <location>
        <position position="177"/>
    </location>
    <ligand>
        <name>NAD(+)</name>
        <dbReference type="ChEBI" id="CHEBI:57540"/>
    </ligand>
</feature>
<feature type="binding site" evidence="1">
    <location>
        <begin position="188"/>
        <end position="193"/>
    </location>
    <ligand>
        <name>NAD(+)</name>
        <dbReference type="ChEBI" id="CHEBI:57540"/>
    </ligand>
</feature>
<feature type="binding site" evidence="1">
    <location>
        <position position="247"/>
    </location>
    <ligand>
        <name>NAD(+)</name>
        <dbReference type="ChEBI" id="CHEBI:57540"/>
    </ligand>
</feature>
<gene>
    <name evidence="1" type="primary">nadK</name>
    <name type="ordered locus">BUAP5A_182</name>
</gene>
<evidence type="ECO:0000255" key="1">
    <source>
        <dbReference type="HAMAP-Rule" id="MF_00361"/>
    </source>
</evidence>